<feature type="chain" id="PRO_1000200170" description="Protein RnfH">
    <location>
        <begin position="1"/>
        <end position="101"/>
    </location>
</feature>
<accession>B6IZH9</accession>
<comment type="similarity">
    <text evidence="1">Belongs to the UPF0125 (RnfH) family.</text>
</comment>
<proteinExistence type="inferred from homology"/>
<protein>
    <recommendedName>
        <fullName evidence="1">Protein RnfH</fullName>
    </recommendedName>
</protein>
<name>RNFH_COXB2</name>
<evidence type="ECO:0000255" key="1">
    <source>
        <dbReference type="HAMAP-Rule" id="MF_00460"/>
    </source>
</evidence>
<organism>
    <name type="scientific">Coxiella burnetii (strain CbuG_Q212)</name>
    <name type="common">Coxiella burnetii (strain Q212)</name>
    <dbReference type="NCBI Taxonomy" id="434923"/>
    <lineage>
        <taxon>Bacteria</taxon>
        <taxon>Pseudomonadati</taxon>
        <taxon>Pseudomonadota</taxon>
        <taxon>Gammaproteobacteria</taxon>
        <taxon>Legionellales</taxon>
        <taxon>Coxiellaceae</taxon>
        <taxon>Coxiella</taxon>
    </lineage>
</organism>
<sequence length="101" mass="11294">MISIIIAYATPEKQVEIPLTVEESCTLVVAVKRSGILQQFPEINLSQAIVGIHNKRTALDAGLRDGDRIEIYRPLTMDPKQARLLRAKRGKIRRMVRGEAG</sequence>
<gene>
    <name evidence="1" type="primary">rnfH</name>
    <name type="ordered locus">CbuG_0706</name>
</gene>
<dbReference type="EMBL" id="CP001019">
    <property type="protein sequence ID" value="ACJ18107.1"/>
    <property type="molecule type" value="Genomic_DNA"/>
</dbReference>
<dbReference type="RefSeq" id="WP_005773020.1">
    <property type="nucleotide sequence ID" value="NC_011527.1"/>
</dbReference>
<dbReference type="SMR" id="B6IZH9"/>
<dbReference type="KEGG" id="cbg:CbuG_0706"/>
<dbReference type="HOGENOM" id="CLU_150721_1_0_6"/>
<dbReference type="Gene3D" id="3.10.20.280">
    <property type="entry name" value="RnfH-like"/>
    <property type="match status" value="1"/>
</dbReference>
<dbReference type="HAMAP" id="MF_00460">
    <property type="entry name" value="UPF0125_RnfH"/>
    <property type="match status" value="1"/>
</dbReference>
<dbReference type="InterPro" id="IPR016155">
    <property type="entry name" value="Mopterin_synth/thiamin_S_b"/>
</dbReference>
<dbReference type="InterPro" id="IPR005346">
    <property type="entry name" value="RnfH"/>
</dbReference>
<dbReference type="InterPro" id="IPR037021">
    <property type="entry name" value="RnfH_sf"/>
</dbReference>
<dbReference type="NCBIfam" id="NF002490">
    <property type="entry name" value="PRK01777.1"/>
    <property type="match status" value="1"/>
</dbReference>
<dbReference type="PANTHER" id="PTHR37483">
    <property type="entry name" value="UPF0125 PROTEIN RATB"/>
    <property type="match status" value="1"/>
</dbReference>
<dbReference type="PANTHER" id="PTHR37483:SF1">
    <property type="entry name" value="UPF0125 PROTEIN RATB"/>
    <property type="match status" value="1"/>
</dbReference>
<dbReference type="Pfam" id="PF03658">
    <property type="entry name" value="Ub-RnfH"/>
    <property type="match status" value="1"/>
</dbReference>
<dbReference type="SUPFAM" id="SSF54285">
    <property type="entry name" value="MoaD/ThiS"/>
    <property type="match status" value="1"/>
</dbReference>
<reference key="1">
    <citation type="journal article" date="2009" name="Infect. Immun.">
        <title>Comparative genomics reveal extensive transposon-mediated genomic plasticity and diversity among potential effector proteins within the genus Coxiella.</title>
        <authorList>
            <person name="Beare P.A."/>
            <person name="Unsworth N."/>
            <person name="Andoh M."/>
            <person name="Voth D.E."/>
            <person name="Omsland A."/>
            <person name="Gilk S.D."/>
            <person name="Williams K.P."/>
            <person name="Sobral B.W."/>
            <person name="Kupko J.J. III"/>
            <person name="Porcella S.F."/>
            <person name="Samuel J.E."/>
            <person name="Heinzen R.A."/>
        </authorList>
    </citation>
    <scope>NUCLEOTIDE SEQUENCE [LARGE SCALE GENOMIC DNA]</scope>
    <source>
        <strain>CbuG_Q212</strain>
    </source>
</reference>